<proteinExistence type="inferred from homology"/>
<dbReference type="EMBL" id="CP000946">
    <property type="protein sequence ID" value="ACA79293.1"/>
    <property type="molecule type" value="Genomic_DNA"/>
</dbReference>
<dbReference type="RefSeq" id="WP_000175943.1">
    <property type="nucleotide sequence ID" value="NZ_MTFT01000024.1"/>
</dbReference>
<dbReference type="SMR" id="B1IS45"/>
<dbReference type="GeneID" id="75169869"/>
<dbReference type="KEGG" id="ecl:EcolC_3682"/>
<dbReference type="HOGENOM" id="CLU_002794_2_1_6"/>
<dbReference type="GO" id="GO:0005829">
    <property type="term" value="C:cytosol"/>
    <property type="evidence" value="ECO:0007669"/>
    <property type="project" value="TreeGrafter"/>
</dbReference>
<dbReference type="GO" id="GO:0005525">
    <property type="term" value="F:GTP binding"/>
    <property type="evidence" value="ECO:0007669"/>
    <property type="project" value="UniProtKB-UniRule"/>
</dbReference>
<dbReference type="GO" id="GO:0003924">
    <property type="term" value="F:GTPase activity"/>
    <property type="evidence" value="ECO:0007669"/>
    <property type="project" value="InterPro"/>
</dbReference>
<dbReference type="GO" id="GO:0097216">
    <property type="term" value="F:guanosine tetraphosphate binding"/>
    <property type="evidence" value="ECO:0007669"/>
    <property type="project" value="UniProtKB-ARBA"/>
</dbReference>
<dbReference type="GO" id="GO:0016150">
    <property type="term" value="F:translation release factor activity, codon nonspecific"/>
    <property type="evidence" value="ECO:0007669"/>
    <property type="project" value="TreeGrafter"/>
</dbReference>
<dbReference type="GO" id="GO:0016149">
    <property type="term" value="F:translation release factor activity, codon specific"/>
    <property type="evidence" value="ECO:0007669"/>
    <property type="project" value="UniProtKB-UniRule"/>
</dbReference>
<dbReference type="GO" id="GO:0006449">
    <property type="term" value="P:regulation of translational termination"/>
    <property type="evidence" value="ECO:0007669"/>
    <property type="project" value="UniProtKB-UniRule"/>
</dbReference>
<dbReference type="CDD" id="cd04169">
    <property type="entry name" value="RF3"/>
    <property type="match status" value="1"/>
</dbReference>
<dbReference type="CDD" id="cd03689">
    <property type="entry name" value="RF3_II"/>
    <property type="match status" value="1"/>
</dbReference>
<dbReference type="CDD" id="cd16259">
    <property type="entry name" value="RF3_III"/>
    <property type="match status" value="1"/>
</dbReference>
<dbReference type="FunFam" id="2.40.30.10:FF:000040">
    <property type="entry name" value="Peptide chain release factor 3"/>
    <property type="match status" value="1"/>
</dbReference>
<dbReference type="FunFam" id="3.30.70.3280:FF:000001">
    <property type="entry name" value="Peptide chain release factor 3"/>
    <property type="match status" value="1"/>
</dbReference>
<dbReference type="FunFam" id="3.40.50.300:FF:000184">
    <property type="entry name" value="Peptide chain release factor 3"/>
    <property type="match status" value="1"/>
</dbReference>
<dbReference type="FunFam" id="3.40.50.300:FF:000253">
    <property type="entry name" value="Peptide chain release factor 3"/>
    <property type="match status" value="1"/>
</dbReference>
<dbReference type="Gene3D" id="3.40.50.300">
    <property type="entry name" value="P-loop containing nucleotide triphosphate hydrolases"/>
    <property type="match status" value="3"/>
</dbReference>
<dbReference type="Gene3D" id="3.30.70.3280">
    <property type="entry name" value="Peptide chain release factor 3, domain III"/>
    <property type="match status" value="1"/>
</dbReference>
<dbReference type="HAMAP" id="MF_00072">
    <property type="entry name" value="Rel_fac_3"/>
    <property type="match status" value="1"/>
</dbReference>
<dbReference type="InterPro" id="IPR053905">
    <property type="entry name" value="EF-G-like_DII"/>
</dbReference>
<dbReference type="InterPro" id="IPR035647">
    <property type="entry name" value="EFG_III/V"/>
</dbReference>
<dbReference type="InterPro" id="IPR031157">
    <property type="entry name" value="G_TR_CS"/>
</dbReference>
<dbReference type="InterPro" id="IPR027417">
    <property type="entry name" value="P-loop_NTPase"/>
</dbReference>
<dbReference type="InterPro" id="IPR004548">
    <property type="entry name" value="PrfC"/>
</dbReference>
<dbReference type="InterPro" id="IPR032090">
    <property type="entry name" value="RF3_C"/>
</dbReference>
<dbReference type="InterPro" id="IPR038467">
    <property type="entry name" value="RF3_dom_3_sf"/>
</dbReference>
<dbReference type="InterPro" id="IPR041732">
    <property type="entry name" value="RF3_GTP-bd"/>
</dbReference>
<dbReference type="InterPro" id="IPR005225">
    <property type="entry name" value="Small_GTP-bd"/>
</dbReference>
<dbReference type="InterPro" id="IPR000795">
    <property type="entry name" value="T_Tr_GTP-bd_dom"/>
</dbReference>
<dbReference type="InterPro" id="IPR009000">
    <property type="entry name" value="Transl_B-barrel_sf"/>
</dbReference>
<dbReference type="NCBIfam" id="TIGR00503">
    <property type="entry name" value="prfC"/>
    <property type="match status" value="1"/>
</dbReference>
<dbReference type="NCBIfam" id="NF001964">
    <property type="entry name" value="PRK00741.1"/>
    <property type="match status" value="1"/>
</dbReference>
<dbReference type="NCBIfam" id="TIGR00231">
    <property type="entry name" value="small_GTP"/>
    <property type="match status" value="1"/>
</dbReference>
<dbReference type="PANTHER" id="PTHR43556">
    <property type="entry name" value="PEPTIDE CHAIN RELEASE FACTOR RF3"/>
    <property type="match status" value="1"/>
</dbReference>
<dbReference type="PANTHER" id="PTHR43556:SF2">
    <property type="entry name" value="PEPTIDE CHAIN RELEASE FACTOR RF3"/>
    <property type="match status" value="1"/>
</dbReference>
<dbReference type="Pfam" id="PF22042">
    <property type="entry name" value="EF-G_D2"/>
    <property type="match status" value="1"/>
</dbReference>
<dbReference type="Pfam" id="PF00009">
    <property type="entry name" value="GTP_EFTU"/>
    <property type="match status" value="1"/>
</dbReference>
<dbReference type="Pfam" id="PF16658">
    <property type="entry name" value="RF3_C"/>
    <property type="match status" value="1"/>
</dbReference>
<dbReference type="PRINTS" id="PR00315">
    <property type="entry name" value="ELONGATNFCT"/>
</dbReference>
<dbReference type="SUPFAM" id="SSF54980">
    <property type="entry name" value="EF-G C-terminal domain-like"/>
    <property type="match status" value="1"/>
</dbReference>
<dbReference type="SUPFAM" id="SSF52540">
    <property type="entry name" value="P-loop containing nucleoside triphosphate hydrolases"/>
    <property type="match status" value="1"/>
</dbReference>
<dbReference type="SUPFAM" id="SSF50447">
    <property type="entry name" value="Translation proteins"/>
    <property type="match status" value="1"/>
</dbReference>
<dbReference type="PROSITE" id="PS00301">
    <property type="entry name" value="G_TR_1"/>
    <property type="match status" value="1"/>
</dbReference>
<dbReference type="PROSITE" id="PS51722">
    <property type="entry name" value="G_TR_2"/>
    <property type="match status" value="1"/>
</dbReference>
<reference key="1">
    <citation type="submission" date="2008-02" db="EMBL/GenBank/DDBJ databases">
        <title>Complete sequence of Escherichia coli C str. ATCC 8739.</title>
        <authorList>
            <person name="Copeland A."/>
            <person name="Lucas S."/>
            <person name="Lapidus A."/>
            <person name="Glavina del Rio T."/>
            <person name="Dalin E."/>
            <person name="Tice H."/>
            <person name="Bruce D."/>
            <person name="Goodwin L."/>
            <person name="Pitluck S."/>
            <person name="Kiss H."/>
            <person name="Brettin T."/>
            <person name="Detter J.C."/>
            <person name="Han C."/>
            <person name="Kuske C.R."/>
            <person name="Schmutz J."/>
            <person name="Larimer F."/>
            <person name="Land M."/>
            <person name="Hauser L."/>
            <person name="Kyrpides N."/>
            <person name="Mikhailova N."/>
            <person name="Ingram L."/>
            <person name="Richardson P."/>
        </authorList>
    </citation>
    <scope>NUCLEOTIDE SEQUENCE [LARGE SCALE GENOMIC DNA]</scope>
    <source>
        <strain>ATCC 8739 / DSM 1576 / NBRC 3972 / NCIMB 8545 / WDCM 00012 / Crooks</strain>
    </source>
</reference>
<feature type="chain" id="PRO_1000075158" description="Peptide chain release factor 3">
    <location>
        <begin position="1"/>
        <end position="529"/>
    </location>
</feature>
<feature type="domain" description="tr-type G">
    <location>
        <begin position="11"/>
        <end position="280"/>
    </location>
</feature>
<feature type="binding site" evidence="1">
    <location>
        <begin position="20"/>
        <end position="27"/>
    </location>
    <ligand>
        <name>GTP</name>
        <dbReference type="ChEBI" id="CHEBI:37565"/>
    </ligand>
</feature>
<feature type="binding site" evidence="1">
    <location>
        <begin position="88"/>
        <end position="92"/>
    </location>
    <ligand>
        <name>GTP</name>
        <dbReference type="ChEBI" id="CHEBI:37565"/>
    </ligand>
</feature>
<feature type="binding site" evidence="1">
    <location>
        <begin position="142"/>
        <end position="145"/>
    </location>
    <ligand>
        <name>GTP</name>
        <dbReference type="ChEBI" id="CHEBI:37565"/>
    </ligand>
</feature>
<keyword id="KW-0963">Cytoplasm</keyword>
<keyword id="KW-0342">GTP-binding</keyword>
<keyword id="KW-0547">Nucleotide-binding</keyword>
<keyword id="KW-0648">Protein biosynthesis</keyword>
<comment type="function">
    <text evidence="1">Increases the formation of ribosomal termination complexes and stimulates activities of RF-1 and RF-2. It binds guanine nucleotides and has strong preference for UGA stop codons. It may interact directly with the ribosome. The stimulation of RF-1 and RF-2 is significantly reduced by GTP and GDP, but not by GMP.</text>
</comment>
<comment type="subcellular location">
    <subcellularLocation>
        <location evidence="1">Cytoplasm</location>
    </subcellularLocation>
</comment>
<comment type="similarity">
    <text evidence="1">Belongs to the TRAFAC class translation factor GTPase superfamily. Classic translation factor GTPase family. PrfC subfamily.</text>
</comment>
<sequence length="529" mass="59590">MTLSPYLQEVAKRRTFAIISHPDAGKTTITEKVLLFGQAIQTAGTVKGRGSNQHAKSDWMEMEKQRGISITTSVMQFPYHDCLVNLLDTPGHEDFSEDTYRTLTAVDCCLMVIDAAKGVEDRTRKLMEVTRLRDTPILTFMNKLDRDIRDPMELLDEVENELKIGCAPITWPIGCGKLFKGVYHLYKDETYLYQSGKGHTIQEVRIVKGLNNPDLDAAVGEDLAQQLRDELELVKGASNEFDKELFLAGEITPVFFGTALGNFGVDHMLDGLVEWAPAPMPRQTDTRTVEASEDKFTGFVFKIQANMDPKHRDRVAFMRVVSGKYEKGMKLRQVRTAKDVVISDALTFMAGDRSHVEEAYPGDILGLHNHGTIQIGDTFTQGEMMKFTGIPNFAPELFRRIRLKDPLKQKQLLKGLVQLSEEGAVQVFRPISNNDLIVGAVGVLQFDVVVSRLKSEYNVEAVYESVNVATARWVECADAKKFEEFKRKNESQLALDGGDNLAYIATSMVNLRLAQERYPDVQFHQTREH</sequence>
<accession>B1IS45</accession>
<gene>
    <name evidence="1" type="primary">prfC</name>
    <name type="ordered locus">EcolC_3682</name>
</gene>
<organism>
    <name type="scientific">Escherichia coli (strain ATCC 8739 / DSM 1576 / NBRC 3972 / NCIMB 8545 / WDCM 00012 / Crooks)</name>
    <dbReference type="NCBI Taxonomy" id="481805"/>
    <lineage>
        <taxon>Bacteria</taxon>
        <taxon>Pseudomonadati</taxon>
        <taxon>Pseudomonadota</taxon>
        <taxon>Gammaproteobacteria</taxon>
        <taxon>Enterobacterales</taxon>
        <taxon>Enterobacteriaceae</taxon>
        <taxon>Escherichia</taxon>
    </lineage>
</organism>
<protein>
    <recommendedName>
        <fullName evidence="1">Peptide chain release factor 3</fullName>
        <shortName evidence="1">RF-3</shortName>
    </recommendedName>
</protein>
<name>RF3_ECOLC</name>
<evidence type="ECO:0000255" key="1">
    <source>
        <dbReference type="HAMAP-Rule" id="MF_00072"/>
    </source>
</evidence>